<feature type="chain" id="PRO_0000282577" description="Transmembrane protein 174">
    <location>
        <begin position="1"/>
        <end position="243"/>
    </location>
</feature>
<feature type="transmembrane region" description="Helical" evidence="2">
    <location>
        <begin position="40"/>
        <end position="60"/>
    </location>
</feature>
<feature type="transmembrane region" description="Helical" evidence="2">
    <location>
        <begin position="73"/>
        <end position="93"/>
    </location>
</feature>
<feature type="splice variant" id="VSP_024210" description="In isoform 2." evidence="5">
    <original>PNPDVDQLEETQLEEEACACFSPPPYEEIYSLPR</original>
    <variation>YGPILMLTS</variation>
    <location>
        <begin position="210"/>
        <end position="243"/>
    </location>
</feature>
<comment type="function">
    <text evidence="1">Regulator of plasma phosphate homeostasis. Decreases serum inorganic phosphate (Pi) uptake by regulating the sodium-phosphate cotransporter SLC34A1 trafficking by PTH and FGF23 in the kidney.</text>
</comment>
<comment type="subunit">
    <text evidence="1">Interacts with SLC34A1; regulates SLC34A1 internalization by PTH and FGF23.</text>
</comment>
<comment type="interaction">
    <interactant intactId="EBI-10276729">
        <id>Q8WUU8</id>
    </interactant>
    <interactant intactId="EBI-747185">
        <id>O95817</id>
        <label>BAG3</label>
    </interactant>
    <organismsDiffer>false</organismsDiffer>
    <experiments>3</experiments>
</comment>
<comment type="interaction">
    <interactant intactId="EBI-10276729">
        <id>Q8WUU8</id>
    </interactant>
    <interactant intactId="EBI-2874501">
        <id>Q08289</id>
        <label>CACNB2</label>
    </interactant>
    <organismsDiffer>false</organismsDiffer>
    <experiments>3</experiments>
</comment>
<comment type="interaction">
    <interactant intactId="EBI-10276729">
        <id>Q8WUU8</id>
    </interactant>
    <interactant intactId="EBI-2807956">
        <id>Q96FZ5</id>
        <label>CMTM7</label>
    </interactant>
    <organismsDiffer>false</organismsDiffer>
    <experiments>4</experiments>
</comment>
<comment type="interaction">
    <interactant intactId="EBI-10276729">
        <id>Q8WUU8</id>
    </interactant>
    <interactant intactId="EBI-3867333">
        <id>A8MQ03</id>
        <label>CYSRT1</label>
    </interactant>
    <organismsDiffer>false</organismsDiffer>
    <experiments>3</experiments>
</comment>
<comment type="interaction">
    <interactant intactId="EBI-10276729">
        <id>Q8WUU8</id>
    </interactant>
    <interactant intactId="EBI-489887">
        <id>P50402</id>
        <label>EMD</label>
    </interactant>
    <organismsDiffer>false</organismsDiffer>
    <experiments>3</experiments>
</comment>
<comment type="interaction">
    <interactant intactId="EBI-10276729">
        <id>Q8WUU8</id>
    </interactant>
    <interactant intactId="EBI-948266">
        <id>O14901</id>
        <label>KLF11</label>
    </interactant>
    <organismsDiffer>false</organismsDiffer>
    <experiments>3</experiments>
</comment>
<comment type="interaction">
    <interactant intactId="EBI-10276729">
        <id>Q8WUU8</id>
    </interactant>
    <interactant intactId="EBI-948001">
        <id>Q15323</id>
        <label>KRT31</label>
    </interactant>
    <organismsDiffer>false</organismsDiffer>
    <experiments>3</experiments>
</comment>
<comment type="interaction">
    <interactant intactId="EBI-10276729">
        <id>Q8WUU8</id>
    </interactant>
    <interactant intactId="EBI-1047093">
        <id>O76011</id>
        <label>KRT34</label>
    </interactant>
    <organismsDiffer>false</organismsDiffer>
    <experiments>3</experiments>
</comment>
<comment type="interaction">
    <interactant intactId="EBI-10276729">
        <id>Q8WUU8</id>
    </interactant>
    <interactant intactId="EBI-3932027">
        <id>P21145</id>
        <label>MAL</label>
    </interactant>
    <organismsDiffer>false</organismsDiffer>
    <experiments>3</experiments>
</comment>
<comment type="interaction">
    <interactant intactId="EBI-10276729">
        <id>Q8WUU8</id>
    </interactant>
    <interactant intactId="EBI-3919291">
        <id>Q9Y342</id>
        <label>PLLP</label>
    </interactant>
    <organismsDiffer>false</organismsDiffer>
    <experiments>3</experiments>
</comment>
<comment type="interaction">
    <interactant intactId="EBI-10276729">
        <id>Q8WUU8</id>
    </interactant>
    <interactant intactId="EBI-8652744">
        <id>Q96IW7</id>
        <label>SEC22A</label>
    </interactant>
    <organismsDiffer>false</organismsDiffer>
    <experiments>3</experiments>
</comment>
<comment type="interaction">
    <interactant intactId="EBI-10276729">
        <id>Q8WUU8</id>
    </interactant>
    <interactant intactId="EBI-347996">
        <id>O43765</id>
        <label>SGTA</label>
    </interactant>
    <organismsDiffer>false</organismsDiffer>
    <experiments>6</experiments>
</comment>
<comment type="subcellular location">
    <subcellularLocation>
        <location evidence="3">Endoplasmic reticulum membrane</location>
        <topology evidence="2">Multi-pass membrane protein</topology>
    </subcellularLocation>
    <subcellularLocation>
        <location evidence="4">Apical cell membrane</location>
        <topology evidence="2">Multi-pass membrane protein</topology>
    </subcellularLocation>
</comment>
<comment type="alternative products">
    <event type="alternative splicing"/>
    <isoform>
        <id>Q8WUU8-1</id>
        <name>1</name>
        <sequence type="displayed"/>
    </isoform>
    <isoform>
        <id>Q8WUU8-2</id>
        <name>2</name>
        <sequence type="described" ref="VSP_024210"/>
    </isoform>
</comment>
<comment type="tissue specificity">
    <text evidence="3 4">Predominantly expressed in kidney (PubMed:20331980). Selectively localized in the apical membrane of renal proximal tubule epithelial cells (PubMed:35459732).</text>
</comment>
<comment type="caution">
    <text evidence="3 4 6">A previous study found the localization of TMEM174 in the endoplasmic reticulum (PubMed:20331980). A more recent study detected TMEM174 in cell membrane (PubMed:35459732). The difference between these two studies could be due to the use of different cell lines.</text>
</comment>
<keyword id="KW-0025">Alternative splicing</keyword>
<keyword id="KW-1003">Cell membrane</keyword>
<keyword id="KW-0256">Endoplasmic reticulum</keyword>
<keyword id="KW-0472">Membrane</keyword>
<keyword id="KW-1185">Reference proteome</keyword>
<keyword id="KW-0812">Transmembrane</keyword>
<keyword id="KW-1133">Transmembrane helix</keyword>
<name>TM174_HUMAN</name>
<proteinExistence type="evidence at protein level"/>
<gene>
    <name type="primary">TMEM174</name>
</gene>
<protein>
    <recommendedName>
        <fullName>Transmembrane protein 174</fullName>
    </recommendedName>
</protein>
<organism>
    <name type="scientific">Homo sapiens</name>
    <name type="common">Human</name>
    <dbReference type="NCBI Taxonomy" id="9606"/>
    <lineage>
        <taxon>Eukaryota</taxon>
        <taxon>Metazoa</taxon>
        <taxon>Chordata</taxon>
        <taxon>Craniata</taxon>
        <taxon>Vertebrata</taxon>
        <taxon>Euteleostomi</taxon>
        <taxon>Mammalia</taxon>
        <taxon>Eutheria</taxon>
        <taxon>Euarchontoglires</taxon>
        <taxon>Primates</taxon>
        <taxon>Haplorrhini</taxon>
        <taxon>Catarrhini</taxon>
        <taxon>Hominidae</taxon>
        <taxon>Homo</taxon>
    </lineage>
</organism>
<sequence>MEQGSGRLEDFPVNVFSVTPYTPSTADIQVSDDDKAGATLLFSGIFLGLVGITFTVMGWIKYQGVSHFEWTQLLGPVLLSVGVTFILIAVCKFKMLSCQLCKESEERVPDSEQTPGGPSFVFTGINQPITFHGATVVQYIPPPYGSPEPMGINTSYLQSVVSPCGLITSGGAAAAMSSPPQYYTIYPQDNSAFVVDEGCLSFTDGGNHRPNPDVDQLEETQLEEEACACFSPPPYEEIYSLPR</sequence>
<reference key="1">
    <citation type="journal article" date="2004" name="Nat. Genet.">
        <title>Complete sequencing and characterization of 21,243 full-length human cDNAs.</title>
        <authorList>
            <person name="Ota T."/>
            <person name="Suzuki Y."/>
            <person name="Nishikawa T."/>
            <person name="Otsuki T."/>
            <person name="Sugiyama T."/>
            <person name="Irie R."/>
            <person name="Wakamatsu A."/>
            <person name="Hayashi K."/>
            <person name="Sato H."/>
            <person name="Nagai K."/>
            <person name="Kimura K."/>
            <person name="Makita H."/>
            <person name="Sekine M."/>
            <person name="Obayashi M."/>
            <person name="Nishi T."/>
            <person name="Shibahara T."/>
            <person name="Tanaka T."/>
            <person name="Ishii S."/>
            <person name="Yamamoto J."/>
            <person name="Saito K."/>
            <person name="Kawai Y."/>
            <person name="Isono Y."/>
            <person name="Nakamura Y."/>
            <person name="Nagahari K."/>
            <person name="Murakami K."/>
            <person name="Yasuda T."/>
            <person name="Iwayanagi T."/>
            <person name="Wagatsuma M."/>
            <person name="Shiratori A."/>
            <person name="Sudo H."/>
            <person name="Hosoiri T."/>
            <person name="Kaku Y."/>
            <person name="Kodaira H."/>
            <person name="Kondo H."/>
            <person name="Sugawara M."/>
            <person name="Takahashi M."/>
            <person name="Kanda K."/>
            <person name="Yokoi T."/>
            <person name="Furuya T."/>
            <person name="Kikkawa E."/>
            <person name="Omura Y."/>
            <person name="Abe K."/>
            <person name="Kamihara K."/>
            <person name="Katsuta N."/>
            <person name="Sato K."/>
            <person name="Tanikawa M."/>
            <person name="Yamazaki M."/>
            <person name="Ninomiya K."/>
            <person name="Ishibashi T."/>
            <person name="Yamashita H."/>
            <person name="Murakawa K."/>
            <person name="Fujimori K."/>
            <person name="Tanai H."/>
            <person name="Kimata M."/>
            <person name="Watanabe M."/>
            <person name="Hiraoka S."/>
            <person name="Chiba Y."/>
            <person name="Ishida S."/>
            <person name="Ono Y."/>
            <person name="Takiguchi S."/>
            <person name="Watanabe S."/>
            <person name="Yosida M."/>
            <person name="Hotuta T."/>
            <person name="Kusano J."/>
            <person name="Kanehori K."/>
            <person name="Takahashi-Fujii A."/>
            <person name="Hara H."/>
            <person name="Tanase T.-O."/>
            <person name="Nomura Y."/>
            <person name="Togiya S."/>
            <person name="Komai F."/>
            <person name="Hara R."/>
            <person name="Takeuchi K."/>
            <person name="Arita M."/>
            <person name="Imose N."/>
            <person name="Musashino K."/>
            <person name="Yuuki H."/>
            <person name="Oshima A."/>
            <person name="Sasaki N."/>
            <person name="Aotsuka S."/>
            <person name="Yoshikawa Y."/>
            <person name="Matsunawa H."/>
            <person name="Ichihara T."/>
            <person name="Shiohata N."/>
            <person name="Sano S."/>
            <person name="Moriya S."/>
            <person name="Momiyama H."/>
            <person name="Satoh N."/>
            <person name="Takami S."/>
            <person name="Terashima Y."/>
            <person name="Suzuki O."/>
            <person name="Nakagawa S."/>
            <person name="Senoh A."/>
            <person name="Mizoguchi H."/>
            <person name="Goto Y."/>
            <person name="Shimizu F."/>
            <person name="Wakebe H."/>
            <person name="Hishigaki H."/>
            <person name="Watanabe T."/>
            <person name="Sugiyama A."/>
            <person name="Takemoto M."/>
            <person name="Kawakami B."/>
            <person name="Yamazaki M."/>
            <person name="Watanabe K."/>
            <person name="Kumagai A."/>
            <person name="Itakura S."/>
            <person name="Fukuzumi Y."/>
            <person name="Fujimori Y."/>
            <person name="Komiyama M."/>
            <person name="Tashiro H."/>
            <person name="Tanigami A."/>
            <person name="Fujiwara T."/>
            <person name="Ono T."/>
            <person name="Yamada K."/>
            <person name="Fujii Y."/>
            <person name="Ozaki K."/>
            <person name="Hirao M."/>
            <person name="Ohmori Y."/>
            <person name="Kawabata A."/>
            <person name="Hikiji T."/>
            <person name="Kobatake N."/>
            <person name="Inagaki H."/>
            <person name="Ikema Y."/>
            <person name="Okamoto S."/>
            <person name="Okitani R."/>
            <person name="Kawakami T."/>
            <person name="Noguchi S."/>
            <person name="Itoh T."/>
            <person name="Shigeta K."/>
            <person name="Senba T."/>
            <person name="Matsumura K."/>
            <person name="Nakajima Y."/>
            <person name="Mizuno T."/>
            <person name="Morinaga M."/>
            <person name="Sasaki M."/>
            <person name="Togashi T."/>
            <person name="Oyama M."/>
            <person name="Hata H."/>
            <person name="Watanabe M."/>
            <person name="Komatsu T."/>
            <person name="Mizushima-Sugano J."/>
            <person name="Satoh T."/>
            <person name="Shirai Y."/>
            <person name="Takahashi Y."/>
            <person name="Nakagawa K."/>
            <person name="Okumura K."/>
            <person name="Nagase T."/>
            <person name="Nomura N."/>
            <person name="Kikuchi H."/>
            <person name="Masuho Y."/>
            <person name="Yamashita R."/>
            <person name="Nakai K."/>
            <person name="Yada T."/>
            <person name="Nakamura Y."/>
            <person name="Ohara O."/>
            <person name="Isogai T."/>
            <person name="Sugano S."/>
        </authorList>
    </citation>
    <scope>NUCLEOTIDE SEQUENCE [LARGE SCALE MRNA] (ISOFORMS 1 AND 2)</scope>
    <source>
        <tissue>Kidney</tissue>
    </source>
</reference>
<reference key="2">
    <citation type="submission" date="2005-07" db="EMBL/GenBank/DDBJ databases">
        <authorList>
            <person name="Mural R.J."/>
            <person name="Istrail S."/>
            <person name="Sutton G.G."/>
            <person name="Florea L."/>
            <person name="Halpern A.L."/>
            <person name="Mobarry C.M."/>
            <person name="Lippert R."/>
            <person name="Walenz B."/>
            <person name="Shatkay H."/>
            <person name="Dew I."/>
            <person name="Miller J.R."/>
            <person name="Flanigan M.J."/>
            <person name="Edwards N.J."/>
            <person name="Bolanos R."/>
            <person name="Fasulo D."/>
            <person name="Halldorsson B.V."/>
            <person name="Hannenhalli S."/>
            <person name="Turner R."/>
            <person name="Yooseph S."/>
            <person name="Lu F."/>
            <person name="Nusskern D.R."/>
            <person name="Shue B.C."/>
            <person name="Zheng X.H."/>
            <person name="Zhong F."/>
            <person name="Delcher A.L."/>
            <person name="Huson D.H."/>
            <person name="Kravitz S.A."/>
            <person name="Mouchard L."/>
            <person name="Reinert K."/>
            <person name="Remington K.A."/>
            <person name="Clark A.G."/>
            <person name="Waterman M.S."/>
            <person name="Eichler E.E."/>
            <person name="Adams M.D."/>
            <person name="Hunkapiller M.W."/>
            <person name="Myers E.W."/>
            <person name="Venter J.C."/>
        </authorList>
    </citation>
    <scope>NUCLEOTIDE SEQUENCE [LARGE SCALE GENOMIC DNA]</scope>
</reference>
<reference key="3">
    <citation type="journal article" date="2004" name="Genome Res.">
        <title>The status, quality, and expansion of the NIH full-length cDNA project: the Mammalian Gene Collection (MGC).</title>
        <authorList>
            <consortium name="The MGC Project Team"/>
        </authorList>
    </citation>
    <scope>NUCLEOTIDE SEQUENCE [LARGE SCALE MRNA] (ISOFORM 1)</scope>
    <source>
        <tissue>Uterus</tissue>
    </source>
</reference>
<reference key="4">
    <citation type="journal article" date="2010" name="Biochem. Biophys. Res. Commun.">
        <title>Human TMEM174 that is highly expressed in kidney tissue activates AP-1 and promotes cell proliferation.</title>
        <authorList>
            <person name="Wang P."/>
            <person name="Sun B."/>
            <person name="Hao D."/>
            <person name="Zhang X."/>
            <person name="Shi T."/>
            <person name="Ma D."/>
        </authorList>
    </citation>
    <scope>SUBCELLULAR LOCATION</scope>
    <scope>TISSUE SPECIFICITY</scope>
</reference>
<reference key="5">
    <citation type="journal article" date="2022" name="J. Am. Soc. Nephrol.">
        <title>Targeted Disruption of a Proximal Tubule-Specific TMEM174 Gene in Mice Causes Hyperphosphatemia and Vascular Calcification.</title>
        <authorList>
            <person name="Miyazaki-Anzai S."/>
            <person name="Keenan A.L."/>
            <person name="Blaine J."/>
            <person name="Miyazaki M."/>
        </authorList>
    </citation>
    <scope>SUBCELLULAR LOCATION</scope>
</reference>
<evidence type="ECO:0000250" key="1">
    <source>
        <dbReference type="UniProtKB" id="Q9DCX7"/>
    </source>
</evidence>
<evidence type="ECO:0000255" key="2"/>
<evidence type="ECO:0000269" key="3">
    <source>
    </source>
</evidence>
<evidence type="ECO:0000269" key="4">
    <source>
    </source>
</evidence>
<evidence type="ECO:0000303" key="5">
    <source>
    </source>
</evidence>
<evidence type="ECO:0000305" key="6"/>
<accession>Q8WUU8</accession>
<accession>B2RDA0</accession>
<accession>Q96N81</accession>
<dbReference type="EMBL" id="AK055830">
    <property type="protein sequence ID" value="BAB71025.1"/>
    <property type="molecule type" value="mRNA"/>
</dbReference>
<dbReference type="EMBL" id="AK315460">
    <property type="protein sequence ID" value="BAG37847.1"/>
    <property type="molecule type" value="mRNA"/>
</dbReference>
<dbReference type="EMBL" id="CH471084">
    <property type="protein sequence ID" value="EAW95719.1"/>
    <property type="molecule type" value="Genomic_DNA"/>
</dbReference>
<dbReference type="EMBL" id="BC019346">
    <property type="protein sequence ID" value="AAH19346.1"/>
    <property type="molecule type" value="mRNA"/>
</dbReference>
<dbReference type="CCDS" id="CCDS4018.1">
    <molecule id="Q8WUU8-1"/>
</dbReference>
<dbReference type="RefSeq" id="NP_694949.1">
    <molecule id="Q8WUU8-1"/>
    <property type="nucleotide sequence ID" value="NM_153217.3"/>
</dbReference>
<dbReference type="BioGRID" id="126393">
    <property type="interactions" value="33"/>
</dbReference>
<dbReference type="FunCoup" id="Q8WUU8">
    <property type="interactions" value="18"/>
</dbReference>
<dbReference type="IntAct" id="Q8WUU8">
    <property type="interactions" value="18"/>
</dbReference>
<dbReference type="STRING" id="9606.ENSP00000296776"/>
<dbReference type="TCDB" id="8.A.193.1.1">
    <property type="family name" value="the phosphate transporter regulator tmem174 (tmem174) family"/>
</dbReference>
<dbReference type="PhosphoSitePlus" id="Q8WUU8"/>
<dbReference type="BioMuta" id="TMEM174"/>
<dbReference type="DMDM" id="74730764"/>
<dbReference type="MassIVE" id="Q8WUU8"/>
<dbReference type="PaxDb" id="9606-ENSP00000296776"/>
<dbReference type="PeptideAtlas" id="Q8WUU8"/>
<dbReference type="ProteomicsDB" id="74712">
    <molecule id="Q8WUU8-1"/>
</dbReference>
<dbReference type="ProteomicsDB" id="74713">
    <molecule id="Q8WUU8-2"/>
</dbReference>
<dbReference type="Antibodypedia" id="48787">
    <property type="antibodies" value="44 antibodies from 15 providers"/>
</dbReference>
<dbReference type="DNASU" id="134288"/>
<dbReference type="Ensembl" id="ENST00000296776.6">
    <molecule id="Q8WUU8-1"/>
    <property type="protein sequence ID" value="ENSP00000296776.5"/>
    <property type="gene ID" value="ENSG00000164325.8"/>
</dbReference>
<dbReference type="GeneID" id="134288"/>
<dbReference type="KEGG" id="hsa:134288"/>
<dbReference type="MANE-Select" id="ENST00000296776.6">
    <property type="protein sequence ID" value="ENSP00000296776.5"/>
    <property type="RefSeq nucleotide sequence ID" value="NM_153217.3"/>
    <property type="RefSeq protein sequence ID" value="NP_694949.1"/>
</dbReference>
<dbReference type="UCSC" id="uc010izc.4">
    <molecule id="Q8WUU8-1"/>
    <property type="organism name" value="human"/>
</dbReference>
<dbReference type="AGR" id="HGNC:28187"/>
<dbReference type="CTD" id="134288"/>
<dbReference type="DisGeNET" id="134288"/>
<dbReference type="GeneCards" id="TMEM174"/>
<dbReference type="HGNC" id="HGNC:28187">
    <property type="gene designation" value="TMEM174"/>
</dbReference>
<dbReference type="HPA" id="ENSG00000164325">
    <property type="expression patterns" value="Tissue enriched (kidney)"/>
</dbReference>
<dbReference type="MIM" id="614909">
    <property type="type" value="gene"/>
</dbReference>
<dbReference type="neXtProt" id="NX_Q8WUU8"/>
<dbReference type="OpenTargets" id="ENSG00000164325"/>
<dbReference type="PharmGKB" id="PA162405935"/>
<dbReference type="VEuPathDB" id="HostDB:ENSG00000164325"/>
<dbReference type="eggNOG" id="ENOG502RZ98">
    <property type="taxonomic scope" value="Eukaryota"/>
</dbReference>
<dbReference type="GeneTree" id="ENSGT00390000004161"/>
<dbReference type="HOGENOM" id="CLU_099888_0_0_1"/>
<dbReference type="InParanoid" id="Q8WUU8"/>
<dbReference type="OMA" id="YYTIYPP"/>
<dbReference type="OrthoDB" id="9931655at2759"/>
<dbReference type="PAN-GO" id="Q8WUU8">
    <property type="GO annotations" value="0 GO annotations based on evolutionary models"/>
</dbReference>
<dbReference type="PhylomeDB" id="Q8WUU8"/>
<dbReference type="TreeFam" id="TF335512"/>
<dbReference type="PathwayCommons" id="Q8WUU8"/>
<dbReference type="SignaLink" id="Q8WUU8"/>
<dbReference type="BioGRID-ORCS" id="134288">
    <property type="hits" value="10 hits in 1127 CRISPR screens"/>
</dbReference>
<dbReference type="GenomeRNAi" id="134288"/>
<dbReference type="Pharos" id="Q8WUU8">
    <property type="development level" value="Tdark"/>
</dbReference>
<dbReference type="PRO" id="PR:Q8WUU8"/>
<dbReference type="Proteomes" id="UP000005640">
    <property type="component" value="Chromosome 5"/>
</dbReference>
<dbReference type="RNAct" id="Q8WUU8">
    <property type="molecule type" value="protein"/>
</dbReference>
<dbReference type="Bgee" id="ENSG00000164325">
    <property type="expression patterns" value="Expressed in kidney epithelium and 43 other cell types or tissues"/>
</dbReference>
<dbReference type="ExpressionAtlas" id="Q8WUU8">
    <property type="expression patterns" value="baseline and differential"/>
</dbReference>
<dbReference type="GO" id="GO:0016324">
    <property type="term" value="C:apical plasma membrane"/>
    <property type="evidence" value="ECO:0007669"/>
    <property type="project" value="UniProtKB-SubCell"/>
</dbReference>
<dbReference type="GO" id="GO:0005789">
    <property type="term" value="C:endoplasmic reticulum membrane"/>
    <property type="evidence" value="ECO:0000314"/>
    <property type="project" value="UniProtKB"/>
</dbReference>
<dbReference type="GO" id="GO:0055062">
    <property type="term" value="P:phosphate ion homeostasis"/>
    <property type="evidence" value="ECO:0000250"/>
    <property type="project" value="UniProtKB"/>
</dbReference>
<dbReference type="InterPro" id="IPR027835">
    <property type="entry name" value="TMEM174"/>
</dbReference>
<dbReference type="PANTHER" id="PTHR31020">
    <property type="entry name" value="TRANSMEMBRANE PROTEIN 174"/>
    <property type="match status" value="1"/>
</dbReference>
<dbReference type="PANTHER" id="PTHR31020:SF1">
    <property type="entry name" value="TRANSMEMBRANE PROTEIN 174"/>
    <property type="match status" value="1"/>
</dbReference>
<dbReference type="Pfam" id="PF15029">
    <property type="entry name" value="TMEM174"/>
    <property type="match status" value="1"/>
</dbReference>